<feature type="signal peptide" evidence="1">
    <location>
        <begin position="1"/>
        <end position="25"/>
    </location>
</feature>
<feature type="chain" id="PRO_0000398232" description="Lipoyl synthase, apicoplast">
    <location>
        <begin position="26"/>
        <end position="442"/>
    </location>
</feature>
<feature type="domain" description="Radical SAM core" evidence="2">
    <location>
        <begin position="189"/>
        <end position="407"/>
    </location>
</feature>
<feature type="region of interest" description="Disordered" evidence="3">
    <location>
        <begin position="92"/>
        <end position="154"/>
    </location>
</feature>
<feature type="compositionally biased region" description="Basic and acidic residues" evidence="3">
    <location>
        <begin position="109"/>
        <end position="127"/>
    </location>
</feature>
<feature type="binding site" evidence="1">
    <location>
        <position position="177"/>
    </location>
    <ligand>
        <name>[4Fe-4S] cluster</name>
        <dbReference type="ChEBI" id="CHEBI:49883"/>
        <label>1</label>
    </ligand>
</feature>
<feature type="binding site" evidence="1">
    <location>
        <position position="182"/>
    </location>
    <ligand>
        <name>[4Fe-4S] cluster</name>
        <dbReference type="ChEBI" id="CHEBI:49883"/>
        <label>1</label>
    </ligand>
</feature>
<feature type="binding site" evidence="1">
    <location>
        <position position="188"/>
    </location>
    <ligand>
        <name>[4Fe-4S] cluster</name>
        <dbReference type="ChEBI" id="CHEBI:49883"/>
        <label>1</label>
    </ligand>
</feature>
<feature type="binding site" evidence="1">
    <location>
        <position position="203"/>
    </location>
    <ligand>
        <name>[4Fe-4S] cluster</name>
        <dbReference type="ChEBI" id="CHEBI:49883"/>
        <label>2</label>
        <note>4Fe-4S-S-AdoMet</note>
    </ligand>
</feature>
<feature type="binding site" evidence="1">
    <location>
        <position position="207"/>
    </location>
    <ligand>
        <name>[4Fe-4S] cluster</name>
        <dbReference type="ChEBI" id="CHEBI:49883"/>
        <label>2</label>
        <note>4Fe-4S-S-AdoMet</note>
    </ligand>
</feature>
<feature type="binding site" evidence="1">
    <location>
        <position position="210"/>
    </location>
    <ligand>
        <name>[4Fe-4S] cluster</name>
        <dbReference type="ChEBI" id="CHEBI:49883"/>
        <label>2</label>
        <note>4Fe-4S-S-AdoMet</note>
    </ligand>
</feature>
<feature type="binding site" evidence="1">
    <location>
        <position position="418"/>
    </location>
    <ligand>
        <name>[4Fe-4S] cluster</name>
        <dbReference type="ChEBI" id="CHEBI:49883"/>
        <label>1</label>
    </ligand>
</feature>
<proteinExistence type="inferred from homology"/>
<sequence length="442" mass="50317">MHVLTPSLYIYAFFIVCVRLKCGRSKRVANAKHATYDMPPKGLRVRDMLEKTAQQNCNQRKRGKCRKFFFLWKMDKMGDTHLGGQANGRKNLLRSESATDEASLGGNPLKEKLKESPANWGKDKQEEQQSTDRLPLPKVGNKMPEKKPDWFHVPAPTGKKYNELKADLKKLKLHTVCEEAQCPNIGECWNIGTATIMLLGDTCTRGCKFCSIKTSSKPLPPDANEPFNTAKAICEWDINYVVLTSVDRDDLPDGGASHFAKTIELIKFSRPEILIECLVSDFQGNVDSIRKLANSGMEVYAHNIETVRRLQKFVRDRRANYEQSLWVLKTAKEINPLLYTKTSIMLGLGETKQEVLQAMADVRQNNIDVITFGQYLRPTKNHLNVVEYVSPQMFDYYKEEGMKMGFKYIASGPLVRSSYKAGEYFMKNLVEQRRGVKLHAEG</sequence>
<dbReference type="EC" id="2.8.1.8" evidence="1"/>
<dbReference type="EMBL" id="AAKM01000009">
    <property type="protein sequence ID" value="EDL44497.1"/>
    <property type="molecule type" value="Genomic_DNA"/>
</dbReference>
<dbReference type="RefSeq" id="XP_001614224.1">
    <property type="nucleotide sequence ID" value="XM_001614174.1"/>
</dbReference>
<dbReference type="SMR" id="A5K883"/>
<dbReference type="FunCoup" id="A5K883">
    <property type="interactions" value="300"/>
</dbReference>
<dbReference type="STRING" id="126793.A5K883"/>
<dbReference type="EnsemblProtists" id="EDL44497">
    <property type="protein sequence ID" value="EDL44497"/>
    <property type="gene ID" value="PVX_083125"/>
</dbReference>
<dbReference type="GeneID" id="5473509"/>
<dbReference type="KEGG" id="pvx:PVX_083125"/>
<dbReference type="VEuPathDB" id="PlasmoDB:PVX_083125"/>
<dbReference type="InParanoid" id="A5K883"/>
<dbReference type="OMA" id="RSCAFCQ"/>
<dbReference type="PhylomeDB" id="A5K883"/>
<dbReference type="UniPathway" id="UPA00538">
    <property type="reaction ID" value="UER00593"/>
</dbReference>
<dbReference type="Proteomes" id="UP000008333">
    <property type="component" value="Chromosome 12"/>
</dbReference>
<dbReference type="GO" id="GO:0020011">
    <property type="term" value="C:apicoplast"/>
    <property type="evidence" value="ECO:0007669"/>
    <property type="project" value="UniProtKB-SubCell"/>
</dbReference>
<dbReference type="GO" id="GO:0005739">
    <property type="term" value="C:mitochondrion"/>
    <property type="evidence" value="ECO:0007669"/>
    <property type="project" value="TreeGrafter"/>
</dbReference>
<dbReference type="GO" id="GO:0051539">
    <property type="term" value="F:4 iron, 4 sulfur cluster binding"/>
    <property type="evidence" value="ECO:0007669"/>
    <property type="project" value="UniProtKB-UniRule"/>
</dbReference>
<dbReference type="GO" id="GO:0016992">
    <property type="term" value="F:lipoate synthase activity"/>
    <property type="evidence" value="ECO:0007669"/>
    <property type="project" value="UniProtKB-UniRule"/>
</dbReference>
<dbReference type="GO" id="GO:0046872">
    <property type="term" value="F:metal ion binding"/>
    <property type="evidence" value="ECO:0007669"/>
    <property type="project" value="UniProtKB-KW"/>
</dbReference>
<dbReference type="CDD" id="cd01335">
    <property type="entry name" value="Radical_SAM"/>
    <property type="match status" value="1"/>
</dbReference>
<dbReference type="Gene3D" id="3.20.20.70">
    <property type="entry name" value="Aldolase class I"/>
    <property type="match status" value="1"/>
</dbReference>
<dbReference type="HAMAP" id="MF_00206">
    <property type="entry name" value="Lipoyl_synth"/>
    <property type="match status" value="1"/>
</dbReference>
<dbReference type="InterPro" id="IPR013785">
    <property type="entry name" value="Aldolase_TIM"/>
</dbReference>
<dbReference type="InterPro" id="IPR006638">
    <property type="entry name" value="Elp3/MiaA/NifB-like_rSAM"/>
</dbReference>
<dbReference type="InterPro" id="IPR031691">
    <property type="entry name" value="LIAS_N"/>
</dbReference>
<dbReference type="InterPro" id="IPR003698">
    <property type="entry name" value="Lipoyl_synth"/>
</dbReference>
<dbReference type="InterPro" id="IPR007197">
    <property type="entry name" value="rSAM"/>
</dbReference>
<dbReference type="NCBIfam" id="TIGR00510">
    <property type="entry name" value="lipA"/>
    <property type="match status" value="1"/>
</dbReference>
<dbReference type="NCBIfam" id="NF004019">
    <property type="entry name" value="PRK05481.1"/>
    <property type="match status" value="1"/>
</dbReference>
<dbReference type="NCBIfam" id="NF009544">
    <property type="entry name" value="PRK12928.1"/>
    <property type="match status" value="1"/>
</dbReference>
<dbReference type="PANTHER" id="PTHR10949">
    <property type="entry name" value="LIPOYL SYNTHASE"/>
    <property type="match status" value="1"/>
</dbReference>
<dbReference type="PANTHER" id="PTHR10949:SF0">
    <property type="entry name" value="LIPOYL SYNTHASE, MITOCHONDRIAL"/>
    <property type="match status" value="1"/>
</dbReference>
<dbReference type="Pfam" id="PF16881">
    <property type="entry name" value="LIAS_N"/>
    <property type="match status" value="1"/>
</dbReference>
<dbReference type="Pfam" id="PF04055">
    <property type="entry name" value="Radical_SAM"/>
    <property type="match status" value="1"/>
</dbReference>
<dbReference type="SFLD" id="SFLDF00271">
    <property type="entry name" value="lipoyl_synthase"/>
    <property type="match status" value="1"/>
</dbReference>
<dbReference type="SFLD" id="SFLDG01058">
    <property type="entry name" value="lipoyl_synthase_like"/>
    <property type="match status" value="1"/>
</dbReference>
<dbReference type="SMART" id="SM00729">
    <property type="entry name" value="Elp3"/>
    <property type="match status" value="1"/>
</dbReference>
<dbReference type="SUPFAM" id="SSF102114">
    <property type="entry name" value="Radical SAM enzymes"/>
    <property type="match status" value="1"/>
</dbReference>
<dbReference type="PROSITE" id="PS51918">
    <property type="entry name" value="RADICAL_SAM"/>
    <property type="match status" value="1"/>
</dbReference>
<protein>
    <recommendedName>
        <fullName evidence="1">Lipoyl synthase, apicoplast</fullName>
        <ecNumber evidence="1">2.8.1.8</ecNumber>
    </recommendedName>
    <alternativeName>
        <fullName evidence="1">Lipoate synthase</fullName>
        <shortName evidence="1">LS</shortName>
        <shortName evidence="1">Lip-syn</shortName>
    </alternativeName>
    <alternativeName>
        <fullName evidence="1">Lipoic acid synthase</fullName>
    </alternativeName>
</protein>
<reference key="1">
    <citation type="journal article" date="2008" name="Nature">
        <title>Comparative genomics of the neglected human malaria parasite Plasmodium vivax.</title>
        <authorList>
            <person name="Carlton J.M."/>
            <person name="Adams J.H."/>
            <person name="Silva J.C."/>
            <person name="Bidwell S.L."/>
            <person name="Lorenzi H."/>
            <person name="Caler E."/>
            <person name="Crabtree J."/>
            <person name="Angiuoli S.V."/>
            <person name="Merino E.F."/>
            <person name="Amedeo P."/>
            <person name="Cheng Q."/>
            <person name="Coulson R.M.R."/>
            <person name="Crabb B.S."/>
            <person name="del Portillo H.A."/>
            <person name="Essien K."/>
            <person name="Feldblyum T.V."/>
            <person name="Fernandez-Becerra C."/>
            <person name="Gilson P.R."/>
            <person name="Gueye A.H."/>
            <person name="Guo X."/>
            <person name="Kang'a S."/>
            <person name="Kooij T.W.A."/>
            <person name="Korsinczky M."/>
            <person name="Meyer E.V.-S."/>
            <person name="Nene V."/>
            <person name="Paulsen I."/>
            <person name="White O."/>
            <person name="Ralph S.A."/>
            <person name="Ren Q."/>
            <person name="Sargeant T.J."/>
            <person name="Salzberg S.L."/>
            <person name="Stoeckert C.J."/>
            <person name="Sullivan S.A."/>
            <person name="Yamamoto M.M."/>
            <person name="Hoffman S.L."/>
            <person name="Wortman J.R."/>
            <person name="Gardner M.J."/>
            <person name="Galinski M.R."/>
            <person name="Barnwell J.W."/>
            <person name="Fraser-Liggett C.M."/>
        </authorList>
    </citation>
    <scope>NUCLEOTIDE SEQUENCE [LARGE SCALE GENOMIC DNA]</scope>
    <source>
        <strain>Salvador I</strain>
    </source>
</reference>
<keyword id="KW-0004">4Fe-4S</keyword>
<keyword id="KW-0933">Apicoplast</keyword>
<keyword id="KW-0408">Iron</keyword>
<keyword id="KW-0411">Iron-sulfur</keyword>
<keyword id="KW-0479">Metal-binding</keyword>
<keyword id="KW-0934">Plastid</keyword>
<keyword id="KW-1185">Reference proteome</keyword>
<keyword id="KW-0949">S-adenosyl-L-methionine</keyword>
<keyword id="KW-0732">Signal</keyword>
<keyword id="KW-0808">Transferase</keyword>
<comment type="function">
    <text evidence="1">Catalyzes the radical-mediated insertion of two sulfur atoms into the C-6 and C-8 positions of the octanoyl moiety bound to the lipoyl domains of lipoate-dependent enzymes, thereby converting the octanoylated domains into lipoylated derivatives.</text>
</comment>
<comment type="catalytic activity">
    <reaction evidence="1">
        <text>[[Fe-S] cluster scaffold protein carrying a second [4Fe-4S](2+) cluster] + N(6)-octanoyl-L-lysyl-[protein] + 2 oxidized [2Fe-2S]-[ferredoxin] + 2 S-adenosyl-L-methionine + 4 H(+) = [[Fe-S] cluster scaffold protein] + N(6)-[(R)-dihydrolipoyl]-L-lysyl-[protein] + 4 Fe(3+) + 2 hydrogen sulfide + 2 5'-deoxyadenosine + 2 L-methionine + 2 reduced [2Fe-2S]-[ferredoxin]</text>
        <dbReference type="Rhea" id="RHEA:16585"/>
        <dbReference type="Rhea" id="RHEA-COMP:9928"/>
        <dbReference type="Rhea" id="RHEA-COMP:10000"/>
        <dbReference type="Rhea" id="RHEA-COMP:10001"/>
        <dbReference type="Rhea" id="RHEA-COMP:10475"/>
        <dbReference type="Rhea" id="RHEA-COMP:14568"/>
        <dbReference type="Rhea" id="RHEA-COMP:14569"/>
        <dbReference type="ChEBI" id="CHEBI:15378"/>
        <dbReference type="ChEBI" id="CHEBI:17319"/>
        <dbReference type="ChEBI" id="CHEBI:29034"/>
        <dbReference type="ChEBI" id="CHEBI:29919"/>
        <dbReference type="ChEBI" id="CHEBI:33722"/>
        <dbReference type="ChEBI" id="CHEBI:33737"/>
        <dbReference type="ChEBI" id="CHEBI:33738"/>
        <dbReference type="ChEBI" id="CHEBI:57844"/>
        <dbReference type="ChEBI" id="CHEBI:59789"/>
        <dbReference type="ChEBI" id="CHEBI:78809"/>
        <dbReference type="ChEBI" id="CHEBI:83100"/>
        <dbReference type="EC" id="2.8.1.8"/>
    </reaction>
</comment>
<comment type="cofactor">
    <cofactor evidence="1">
        <name>[4Fe-4S] cluster</name>
        <dbReference type="ChEBI" id="CHEBI:49883"/>
    </cofactor>
    <text evidence="1">Binds 2 [4Fe-4S] clusters per subunit. One cluster is coordinated with 3 cysteines and an exchangeable S-adenosyl-L-methionine.</text>
</comment>
<comment type="pathway">
    <text evidence="1">Protein modification; protein lipoylation via endogenous pathway; protein N(6)-(lipoyl)lysine from octanoyl-[acyl-carrier-protein]: step 2/2.</text>
</comment>
<comment type="subcellular location">
    <subcellularLocation>
        <location evidence="1">Plastid</location>
        <location evidence="1">Apicoplast</location>
    </subcellularLocation>
</comment>
<comment type="similarity">
    <text evidence="1">Belongs to the radical SAM superfamily. Lipoyl synthase family.</text>
</comment>
<name>LIPA_PLAVS</name>
<accession>A5K883</accession>
<evidence type="ECO:0000255" key="1">
    <source>
        <dbReference type="HAMAP-Rule" id="MF_03123"/>
    </source>
</evidence>
<evidence type="ECO:0000255" key="2">
    <source>
        <dbReference type="PROSITE-ProRule" id="PRU01266"/>
    </source>
</evidence>
<evidence type="ECO:0000256" key="3">
    <source>
        <dbReference type="SAM" id="MobiDB-lite"/>
    </source>
</evidence>
<gene>
    <name evidence="1" type="primary">lipA</name>
    <name type="ORF">PVX_083125</name>
</gene>
<organism>
    <name type="scientific">Plasmodium vivax (strain Salvador I)</name>
    <dbReference type="NCBI Taxonomy" id="126793"/>
    <lineage>
        <taxon>Eukaryota</taxon>
        <taxon>Sar</taxon>
        <taxon>Alveolata</taxon>
        <taxon>Apicomplexa</taxon>
        <taxon>Aconoidasida</taxon>
        <taxon>Haemosporida</taxon>
        <taxon>Plasmodiidae</taxon>
        <taxon>Plasmodium</taxon>
        <taxon>Plasmodium (Plasmodium)</taxon>
    </lineage>
</organism>